<dbReference type="EMBL" id="BC090714">
    <property type="protein sequence ID" value="AAH90714.1"/>
    <property type="molecule type" value="mRNA"/>
</dbReference>
<dbReference type="EMBL" id="BC125829">
    <property type="protein sequence ID" value="AAI25830.1"/>
    <property type="molecule type" value="mRNA"/>
</dbReference>
<dbReference type="RefSeq" id="NP_001071028.1">
    <property type="nucleotide sequence ID" value="NM_001077560.1"/>
</dbReference>
<dbReference type="SMR" id="A0JMD0"/>
<dbReference type="FunCoup" id="A0JMD0">
    <property type="interactions" value="2036"/>
</dbReference>
<dbReference type="STRING" id="7955.ENSDARP00000047470"/>
<dbReference type="PaxDb" id="7955-ENSDARP00000047470"/>
<dbReference type="PeptideAtlas" id="A0JMD0"/>
<dbReference type="GeneID" id="562666"/>
<dbReference type="KEGG" id="dre:562666"/>
<dbReference type="AGR" id="ZFIN:ZDB-GENE-061103-457"/>
<dbReference type="CTD" id="562666"/>
<dbReference type="ZFIN" id="ZDB-GENE-061103-457">
    <property type="gene designation" value="cluha"/>
</dbReference>
<dbReference type="eggNOG" id="KOG1839">
    <property type="taxonomic scope" value="Eukaryota"/>
</dbReference>
<dbReference type="InParanoid" id="A0JMD0"/>
<dbReference type="OrthoDB" id="1414216at2759"/>
<dbReference type="PhylomeDB" id="A0JMD0"/>
<dbReference type="PRO" id="PR:A0JMD0"/>
<dbReference type="Proteomes" id="UP000000437">
    <property type="component" value="Chromosome 15"/>
</dbReference>
<dbReference type="GO" id="GO:0005737">
    <property type="term" value="C:cytoplasm"/>
    <property type="evidence" value="ECO:0000318"/>
    <property type="project" value="GO_Central"/>
</dbReference>
<dbReference type="GO" id="GO:0003729">
    <property type="term" value="F:mRNA binding"/>
    <property type="evidence" value="ECO:0000250"/>
    <property type="project" value="UniProtKB"/>
</dbReference>
<dbReference type="GO" id="GO:0048312">
    <property type="term" value="P:intracellular distribution of mitochondria"/>
    <property type="evidence" value="ECO:0000250"/>
    <property type="project" value="UniProtKB"/>
</dbReference>
<dbReference type="GO" id="GO:0007005">
    <property type="term" value="P:mitochondrion organization"/>
    <property type="evidence" value="ECO:0000250"/>
    <property type="project" value="UniProtKB"/>
</dbReference>
<dbReference type="CDD" id="cd15466">
    <property type="entry name" value="CLU-central"/>
    <property type="match status" value="1"/>
</dbReference>
<dbReference type="FunFam" id="1.25.40.10:FF:000088">
    <property type="entry name" value="Clustered mitochondria (CluA/CLU1) homolog"/>
    <property type="match status" value="1"/>
</dbReference>
<dbReference type="FunFam" id="3.30.2280.10:FF:000001">
    <property type="entry name" value="Clustered mitochondria (CluA/CLU1) homolog"/>
    <property type="match status" value="1"/>
</dbReference>
<dbReference type="Gene3D" id="3.30.2280.10">
    <property type="entry name" value="Hypothetical protein (hspc210)"/>
    <property type="match status" value="1"/>
</dbReference>
<dbReference type="Gene3D" id="1.25.40.10">
    <property type="entry name" value="Tetratricopeptide repeat domain"/>
    <property type="match status" value="1"/>
</dbReference>
<dbReference type="HAMAP" id="MF_03013">
    <property type="entry name" value="CLU"/>
    <property type="match status" value="1"/>
</dbReference>
<dbReference type="InterPro" id="IPR033646">
    <property type="entry name" value="CLU-central"/>
</dbReference>
<dbReference type="InterPro" id="IPR025697">
    <property type="entry name" value="CLU_dom"/>
</dbReference>
<dbReference type="InterPro" id="IPR028275">
    <property type="entry name" value="CLU_N"/>
</dbReference>
<dbReference type="InterPro" id="IPR027523">
    <property type="entry name" value="CLU_prot"/>
</dbReference>
<dbReference type="InterPro" id="IPR023231">
    <property type="entry name" value="GSKIP_dom_sf"/>
</dbReference>
<dbReference type="InterPro" id="IPR011990">
    <property type="entry name" value="TPR-like_helical_dom_sf"/>
</dbReference>
<dbReference type="PANTHER" id="PTHR12601:SF10">
    <property type="entry name" value="CLUSTERED MITOCHONDRIA PROTEIN HOMOLOG"/>
    <property type="match status" value="1"/>
</dbReference>
<dbReference type="PANTHER" id="PTHR12601">
    <property type="entry name" value="EUKARYOTIC TRANSLATION INITIATION FACTOR 3 SUBUNIT EIF-3"/>
    <property type="match status" value="1"/>
</dbReference>
<dbReference type="Pfam" id="PF13236">
    <property type="entry name" value="CLU"/>
    <property type="match status" value="1"/>
</dbReference>
<dbReference type="Pfam" id="PF15044">
    <property type="entry name" value="CLU_N"/>
    <property type="match status" value="1"/>
</dbReference>
<dbReference type="Pfam" id="PF12807">
    <property type="entry name" value="eIF3_p135"/>
    <property type="match status" value="1"/>
</dbReference>
<dbReference type="Pfam" id="PF13424">
    <property type="entry name" value="TPR_12"/>
    <property type="match status" value="2"/>
</dbReference>
<dbReference type="SUPFAM" id="SSF103107">
    <property type="entry name" value="Hypothetical protein c14orf129, hspc210"/>
    <property type="match status" value="1"/>
</dbReference>
<dbReference type="SUPFAM" id="SSF48452">
    <property type="entry name" value="TPR-like"/>
    <property type="match status" value="2"/>
</dbReference>
<dbReference type="PROSITE" id="PS51823">
    <property type="entry name" value="CLU"/>
    <property type="match status" value="1"/>
</dbReference>
<gene>
    <name evidence="1" type="primary">cluh</name>
    <name type="ORF">zgc:152873</name>
</gene>
<organism>
    <name type="scientific">Danio rerio</name>
    <name type="common">Zebrafish</name>
    <name type="synonym">Brachydanio rerio</name>
    <dbReference type="NCBI Taxonomy" id="7955"/>
    <lineage>
        <taxon>Eukaryota</taxon>
        <taxon>Metazoa</taxon>
        <taxon>Chordata</taxon>
        <taxon>Craniata</taxon>
        <taxon>Vertebrata</taxon>
        <taxon>Euteleostomi</taxon>
        <taxon>Actinopterygii</taxon>
        <taxon>Neopterygii</taxon>
        <taxon>Teleostei</taxon>
        <taxon>Ostariophysi</taxon>
        <taxon>Cypriniformes</taxon>
        <taxon>Danionidae</taxon>
        <taxon>Danioninae</taxon>
        <taxon>Danio</taxon>
    </lineage>
</organism>
<reference key="1">
    <citation type="submission" date="2006-10" db="EMBL/GenBank/DDBJ databases">
        <authorList>
            <consortium name="NIH - Zebrafish Gene Collection (ZGC) project"/>
        </authorList>
    </citation>
    <scope>NUCLEOTIDE SEQUENCE [LARGE SCALE MRNA]</scope>
    <source>
        <strain>AB</strain>
        <tissue>Embryo</tissue>
    </source>
</reference>
<name>CLU_DANRE</name>
<evidence type="ECO:0000255" key="1">
    <source>
        <dbReference type="HAMAP-Rule" id="MF_03013"/>
    </source>
</evidence>
<evidence type="ECO:0000255" key="2">
    <source>
        <dbReference type="PROSITE-ProRule" id="PRU01167"/>
    </source>
</evidence>
<evidence type="ECO:0000256" key="3">
    <source>
        <dbReference type="SAM" id="MobiDB-lite"/>
    </source>
</evidence>
<evidence type="ECO:0000305" key="4"/>
<protein>
    <recommendedName>
        <fullName evidence="1">Clustered mitochondria protein homolog</fullName>
    </recommendedName>
</protein>
<feature type="chain" id="PRO_0000366374" description="Clustered mitochondria protein homolog">
    <location>
        <begin position="1"/>
        <end position="1400"/>
    </location>
</feature>
<feature type="domain" description="Clu" evidence="2">
    <location>
        <begin position="380"/>
        <end position="622"/>
    </location>
</feature>
<feature type="repeat" description="TPR 1">
    <location>
        <begin position="1088"/>
        <end position="1121"/>
    </location>
</feature>
<feature type="repeat" description="TPR 2">
    <location>
        <begin position="1130"/>
        <end position="1163"/>
    </location>
</feature>
<feature type="repeat" description="TPR 3">
    <location>
        <begin position="1172"/>
        <end position="1205"/>
    </location>
</feature>
<feature type="repeat" description="TPR 4">
    <location>
        <begin position="1214"/>
        <end position="1247"/>
    </location>
</feature>
<feature type="region of interest" description="Disordered" evidence="3">
    <location>
        <begin position="1"/>
        <end position="39"/>
    </location>
</feature>
<feature type="region of interest" description="Disordered" evidence="3">
    <location>
        <begin position="56"/>
        <end position="78"/>
    </location>
</feature>
<feature type="region of interest" description="Disordered" evidence="3">
    <location>
        <begin position="212"/>
        <end position="243"/>
    </location>
</feature>
<feature type="region of interest" description="Disordered" evidence="3">
    <location>
        <begin position="684"/>
        <end position="741"/>
    </location>
</feature>
<feature type="region of interest" description="Disordered" evidence="3">
    <location>
        <begin position="1377"/>
        <end position="1400"/>
    </location>
</feature>
<feature type="compositionally biased region" description="Basic and acidic residues" evidence="3">
    <location>
        <begin position="56"/>
        <end position="69"/>
    </location>
</feature>
<feature type="compositionally biased region" description="Low complexity" evidence="3">
    <location>
        <begin position="707"/>
        <end position="722"/>
    </location>
</feature>
<feature type="compositionally biased region" description="Polar residues" evidence="3">
    <location>
        <begin position="727"/>
        <end position="741"/>
    </location>
</feature>
<feature type="compositionally biased region" description="Polar residues" evidence="3">
    <location>
        <begin position="1377"/>
        <end position="1388"/>
    </location>
</feature>
<feature type="compositionally biased region" description="Basic and acidic residues" evidence="3">
    <location>
        <begin position="1390"/>
        <end position="1400"/>
    </location>
</feature>
<feature type="sequence conflict" description="In Ref. 1; AAH90714." evidence="4" ref="1">
    <original>L</original>
    <variation>S</variation>
    <location>
        <position position="1304"/>
    </location>
</feature>
<comment type="function">
    <text evidence="1">mRNA-binding protein involved in proper cytoplasmic distribution of mitochondria.</text>
</comment>
<comment type="subcellular location">
    <subcellularLocation>
        <location evidence="1">Cytoplasm</location>
    </subcellularLocation>
</comment>
<comment type="similarity">
    <text evidence="1">Belongs to the CLU family.</text>
</comment>
<keyword id="KW-0963">Cytoplasm</keyword>
<keyword id="KW-1185">Reference proteome</keyword>
<keyword id="KW-0677">Repeat</keyword>
<keyword id="KW-0802">TPR repeat</keyword>
<accession>A0JMD0</accession>
<accession>Q5CZT5</accession>
<proteinExistence type="evidence at transcript level"/>
<sequence>MVSKTDDIPASVPNCSPADFARDGETANSKGTTSKKEASCACGHGVETAVMNGDAGHDQAEEADSKQDGSGDADQAEDANEQEVIVIQDTGFTVKIQAPGTEPFDLQVSPQEMVQEIHQVLMDREDTCHRTCFSLQLDGNVLDNFAELKSIEGLQEGSLLKVVEEPYTVREARIHVRHIRDLLKSLDPSDAYNGVDCNSLSFLSVFSEGDLGDTGKRKKKGSELEQIDCTPPEHILPGSKERPLVPLQPQNKDWKPMQCLKVLTMSSWNPPPGNRKMHGDLMYLYIVTVEDRHVSITASTRGFYLNQSTTYNFSPKPANPSFLSHSLVELLSQISAAFKKNFTTLQKKRVQRHPFERIATPFQVYSWTAPQIDHAMDCVRAEDAYTSRLGYEEHIPGQTRDWNEELQTTRELSRKNLPERLLRERAIFKVHSDFAAAATRGAMAVIDGNVMAINPGEETRMQMFIWNNIFFSLGFDVRDHYRELGGDSAAHAAPTNDLNGVRAYSAVDVEGLYTLGTVVVDYRGYRVTAQSIIPGILEREQEQSVIYGSIDFGKTVVSHPKYLELLEKTSRPLKVQRHAVLNEKDSAVELCSSVECKGIIGNDGRHYILDLLRTFPPDLNFLPVEGEELTPESQKLGFPRQHRHRLACLRQELIEAFVEHRYLLFMKMAALQLMQQKANKDKTAALQDSNAAGAGSENKPLALESCDGTPDSPTSSESTLTPEDSEATTVSENSSAENQEAMTEVPVASINGTHEPLAAERQNGGCDGPLEGKEADENIPGLAQAKELAESLAAEDGSGIDPKSREVVLNACKAVGSISNTSFDIRFNPDIFSPGVRFPDDSNDDIKKQKQLLKDAAAFLVSCQIPSLVKDCLDHSSLPMDGATLTEALHQRGINVRYLGTVLEFMDNMPAKAQLEHIYRIGISELITRCAKHIFKTYLQGVDLSALSAAVSYFLNCLLSSFPDAVAHLPADELVSRKKSRKRRNRVPGGGDNTAWASLTPSELWKNITSEAHGYYNFSLQCESVDQAVEKYGLQKITLLREISIKTGIQILIKEYNFDSRHKPAFTEEDILNIFPVVKHVNPKASDAFHFFQSGQAKVQQGFLKEGCELINEALNLFNNVYGAMHVEICACLRLLARLNYIMGDHPEALSNQQKAVLMSERVLGIEHPNTIQEYMHLALYCFANGQLSTALKLLYRARYLMLVVCGEDHPEMALLDSNIGLVLHGVMEYDLSLRFLENALAINTKYHGPRSLKVALSHHLVARVYESKAEFRSALQHEKEGYTIYKNQVGEAHEKTKESSEYLKYLTQQAVALQRTMNEIYKNGSNASIMPLKFTAPSMASVLEQLNIINGIIFIPLSQKDLENLKAEVQRRQLMQDSGKIQEQQGSHLELDDKLPVDD</sequence>